<gene>
    <name evidence="1" type="primary">rpl32</name>
    <name type="ORF">PSC1156</name>
</gene>
<accession>Q68RV8</accession>
<geneLocation type="chloroplast"/>
<protein>
    <recommendedName>
        <fullName evidence="1">Large ribosomal subunit protein bL32c</fullName>
    </recommendedName>
    <alternativeName>
        <fullName evidence="2">50S ribosomal protein L32, chloroplastic</fullName>
    </alternativeName>
</protein>
<sequence>MAVPKKRTSISKKRIRKNIWKRKGYWAALKALSLGKSLSTGNSKGFFVRQTNKS</sequence>
<evidence type="ECO:0000255" key="1">
    <source>
        <dbReference type="HAMAP-Rule" id="MF_00340"/>
    </source>
</evidence>
<evidence type="ECO:0000305" key="2"/>
<dbReference type="EMBL" id="AY582139">
    <property type="protein sequence ID" value="AAT98558.1"/>
    <property type="molecule type" value="Genomic_DNA"/>
</dbReference>
<dbReference type="RefSeq" id="YP_087014.1">
    <property type="nucleotide sequence ID" value="NC_006290.1"/>
</dbReference>
<dbReference type="SMR" id="Q68RV8"/>
<dbReference type="GeneID" id="3021562"/>
<dbReference type="GO" id="GO:0009507">
    <property type="term" value="C:chloroplast"/>
    <property type="evidence" value="ECO:0007669"/>
    <property type="project" value="UniProtKB-SubCell"/>
</dbReference>
<dbReference type="GO" id="GO:0015934">
    <property type="term" value="C:large ribosomal subunit"/>
    <property type="evidence" value="ECO:0007669"/>
    <property type="project" value="InterPro"/>
</dbReference>
<dbReference type="GO" id="GO:0003735">
    <property type="term" value="F:structural constituent of ribosome"/>
    <property type="evidence" value="ECO:0007669"/>
    <property type="project" value="InterPro"/>
</dbReference>
<dbReference type="GO" id="GO:0006412">
    <property type="term" value="P:translation"/>
    <property type="evidence" value="ECO:0007669"/>
    <property type="project" value="UniProtKB-UniRule"/>
</dbReference>
<dbReference type="HAMAP" id="MF_00340">
    <property type="entry name" value="Ribosomal_bL32"/>
    <property type="match status" value="1"/>
</dbReference>
<dbReference type="InterPro" id="IPR002677">
    <property type="entry name" value="Ribosomal_bL32"/>
</dbReference>
<dbReference type="InterPro" id="IPR044958">
    <property type="entry name" value="Ribosomal_bL32_plant/cyanobact"/>
</dbReference>
<dbReference type="InterPro" id="IPR011332">
    <property type="entry name" value="Ribosomal_zn-bd"/>
</dbReference>
<dbReference type="PANTHER" id="PTHR36083">
    <property type="entry name" value="50S RIBOSOMAL PROTEIN L32, CHLOROPLASTIC"/>
    <property type="match status" value="1"/>
</dbReference>
<dbReference type="PANTHER" id="PTHR36083:SF1">
    <property type="entry name" value="LARGE RIBOSOMAL SUBUNIT PROTEIN BL32C"/>
    <property type="match status" value="1"/>
</dbReference>
<dbReference type="Pfam" id="PF01783">
    <property type="entry name" value="Ribosomal_L32p"/>
    <property type="match status" value="1"/>
</dbReference>
<dbReference type="SUPFAM" id="SSF57829">
    <property type="entry name" value="Zn-binding ribosomal proteins"/>
    <property type="match status" value="1"/>
</dbReference>
<keyword id="KW-0150">Chloroplast</keyword>
<keyword id="KW-0934">Plastid</keyword>
<keyword id="KW-0687">Ribonucleoprotein</keyword>
<keyword id="KW-0689">Ribosomal protein</keyword>
<proteinExistence type="inferred from homology"/>
<name>RK32_PANGI</name>
<feature type="chain" id="PRO_0000172471" description="Large ribosomal subunit protein bL32c">
    <location>
        <begin position="1"/>
        <end position="54"/>
    </location>
</feature>
<reference key="1">
    <citation type="journal article" date="2004" name="DNA Res.">
        <title>Complete chloroplast genome sequence from Korea ginseng (Panax schinseng Nees) and comparative analysis of sequence evolution among 17 vascular plants.</title>
        <authorList>
            <person name="Kim K.-J."/>
            <person name="Lee H.-L."/>
        </authorList>
    </citation>
    <scope>NUCLEOTIDE SEQUENCE [LARGE SCALE GENOMIC DNA]</scope>
</reference>
<organism>
    <name type="scientific">Panax ginseng</name>
    <name type="common">Korean ginseng</name>
    <dbReference type="NCBI Taxonomy" id="4054"/>
    <lineage>
        <taxon>Eukaryota</taxon>
        <taxon>Viridiplantae</taxon>
        <taxon>Streptophyta</taxon>
        <taxon>Embryophyta</taxon>
        <taxon>Tracheophyta</taxon>
        <taxon>Spermatophyta</taxon>
        <taxon>Magnoliopsida</taxon>
        <taxon>eudicotyledons</taxon>
        <taxon>Gunneridae</taxon>
        <taxon>Pentapetalae</taxon>
        <taxon>asterids</taxon>
        <taxon>campanulids</taxon>
        <taxon>Apiales</taxon>
        <taxon>Araliaceae</taxon>
        <taxon>Panax</taxon>
    </lineage>
</organism>
<comment type="subcellular location">
    <subcellularLocation>
        <location>Plastid</location>
        <location>Chloroplast</location>
    </subcellularLocation>
</comment>
<comment type="similarity">
    <text evidence="1">Belongs to the bacterial ribosomal protein bL32 family.</text>
</comment>